<dbReference type="EMBL" id="CP000849">
    <property type="protein sequence ID" value="ABV79762.1"/>
    <property type="molecule type" value="Genomic_DNA"/>
</dbReference>
<dbReference type="RefSeq" id="WP_012152237.1">
    <property type="nucleotide sequence ID" value="NC_009883.1"/>
</dbReference>
<dbReference type="SMR" id="A8GY12"/>
<dbReference type="KEGG" id="rbo:A1I_07320"/>
<dbReference type="HOGENOM" id="CLU_113441_2_0_5"/>
<dbReference type="GO" id="GO:0005737">
    <property type="term" value="C:cytoplasm"/>
    <property type="evidence" value="ECO:0007669"/>
    <property type="project" value="UniProtKB-ARBA"/>
</dbReference>
<dbReference type="GO" id="GO:1990904">
    <property type="term" value="C:ribonucleoprotein complex"/>
    <property type="evidence" value="ECO:0007669"/>
    <property type="project" value="UniProtKB-KW"/>
</dbReference>
<dbReference type="GO" id="GO:0005840">
    <property type="term" value="C:ribosome"/>
    <property type="evidence" value="ECO:0007669"/>
    <property type="project" value="UniProtKB-KW"/>
</dbReference>
<dbReference type="GO" id="GO:0070181">
    <property type="term" value="F:small ribosomal subunit rRNA binding"/>
    <property type="evidence" value="ECO:0007669"/>
    <property type="project" value="TreeGrafter"/>
</dbReference>
<dbReference type="GO" id="GO:0003735">
    <property type="term" value="F:structural constituent of ribosome"/>
    <property type="evidence" value="ECO:0007669"/>
    <property type="project" value="InterPro"/>
</dbReference>
<dbReference type="GO" id="GO:0006412">
    <property type="term" value="P:translation"/>
    <property type="evidence" value="ECO:0007669"/>
    <property type="project" value="UniProtKB-UniRule"/>
</dbReference>
<dbReference type="CDD" id="cd00473">
    <property type="entry name" value="bS6"/>
    <property type="match status" value="1"/>
</dbReference>
<dbReference type="Gene3D" id="3.30.70.60">
    <property type="match status" value="1"/>
</dbReference>
<dbReference type="HAMAP" id="MF_00360">
    <property type="entry name" value="Ribosomal_bS6"/>
    <property type="match status" value="1"/>
</dbReference>
<dbReference type="InterPro" id="IPR000529">
    <property type="entry name" value="Ribosomal_bS6"/>
</dbReference>
<dbReference type="InterPro" id="IPR035980">
    <property type="entry name" value="Ribosomal_bS6_sf"/>
</dbReference>
<dbReference type="InterPro" id="IPR020814">
    <property type="entry name" value="Ribosomal_S6_plastid/chlpt"/>
</dbReference>
<dbReference type="InterPro" id="IPR014717">
    <property type="entry name" value="Transl_elong_EF1B/ribsomal_bS6"/>
</dbReference>
<dbReference type="NCBIfam" id="TIGR00166">
    <property type="entry name" value="S6"/>
    <property type="match status" value="1"/>
</dbReference>
<dbReference type="PANTHER" id="PTHR21011">
    <property type="entry name" value="MITOCHONDRIAL 28S RIBOSOMAL PROTEIN S6"/>
    <property type="match status" value="1"/>
</dbReference>
<dbReference type="PANTHER" id="PTHR21011:SF1">
    <property type="entry name" value="SMALL RIBOSOMAL SUBUNIT PROTEIN BS6M"/>
    <property type="match status" value="1"/>
</dbReference>
<dbReference type="Pfam" id="PF01250">
    <property type="entry name" value="Ribosomal_S6"/>
    <property type="match status" value="1"/>
</dbReference>
<dbReference type="SUPFAM" id="SSF54995">
    <property type="entry name" value="Ribosomal protein S6"/>
    <property type="match status" value="1"/>
</dbReference>
<accession>A8GY12</accession>
<evidence type="ECO:0000255" key="1">
    <source>
        <dbReference type="HAMAP-Rule" id="MF_00360"/>
    </source>
</evidence>
<evidence type="ECO:0000256" key="2">
    <source>
        <dbReference type="SAM" id="MobiDB-lite"/>
    </source>
</evidence>
<evidence type="ECO:0000305" key="3"/>
<comment type="function">
    <text evidence="1">Binds together with bS18 to 16S ribosomal RNA.</text>
</comment>
<comment type="similarity">
    <text evidence="1">Belongs to the bacterial ribosomal protein bS6 family.</text>
</comment>
<keyword id="KW-0687">Ribonucleoprotein</keyword>
<keyword id="KW-0689">Ribosomal protein</keyword>
<keyword id="KW-0694">RNA-binding</keyword>
<keyword id="KW-0699">rRNA-binding</keyword>
<name>RS6_RICB8</name>
<protein>
    <recommendedName>
        <fullName evidence="1">Small ribosomal subunit protein bS6</fullName>
    </recommendedName>
    <alternativeName>
        <fullName evidence="3">30S ribosomal protein S6</fullName>
    </alternativeName>
</protein>
<feature type="chain" id="PRO_1000005336" description="Small ribosomal subunit protein bS6">
    <location>
        <begin position="1"/>
        <end position="120"/>
    </location>
</feature>
<feature type="region of interest" description="Disordered" evidence="2">
    <location>
        <begin position="97"/>
        <end position="120"/>
    </location>
</feature>
<feature type="compositionally biased region" description="Polar residues" evidence="2">
    <location>
        <begin position="97"/>
        <end position="112"/>
    </location>
</feature>
<gene>
    <name evidence="1" type="primary">rpsF</name>
    <name type="ordered locus">A1I_07320</name>
</gene>
<proteinExistence type="inferred from homology"/>
<reference key="1">
    <citation type="submission" date="2007-09" db="EMBL/GenBank/DDBJ databases">
        <title>Complete genome sequencing of Rickettsia bellii.</title>
        <authorList>
            <person name="Madan A."/>
            <person name="Lee H."/>
            <person name="Madan A."/>
            <person name="Yoon J.-G."/>
            <person name="Ryu G.-Y."/>
            <person name="Dasch G."/>
            <person name="Ereemeva M."/>
        </authorList>
    </citation>
    <scope>NUCLEOTIDE SEQUENCE [LARGE SCALE GENOMIC DNA]</scope>
    <source>
        <strain>OSU 85-389</strain>
    </source>
</reference>
<sequence>MSFYESVFIVRQDVSLNDIDKIVDDFTKIIKDNNGAIVKKEYWGLRALAYKIGNHKKGHYYLLGLDTTPAVKQELERKMKLNENIIRFLTQKVDSISNEPSPILKNQSTENTPVIDVTAN</sequence>
<organism>
    <name type="scientific">Rickettsia bellii (strain OSU 85-389)</name>
    <dbReference type="NCBI Taxonomy" id="391896"/>
    <lineage>
        <taxon>Bacteria</taxon>
        <taxon>Pseudomonadati</taxon>
        <taxon>Pseudomonadota</taxon>
        <taxon>Alphaproteobacteria</taxon>
        <taxon>Rickettsiales</taxon>
        <taxon>Rickettsiaceae</taxon>
        <taxon>Rickettsieae</taxon>
        <taxon>Rickettsia</taxon>
        <taxon>belli group</taxon>
    </lineage>
</organism>